<feature type="chain" id="PRO_1000114913" description="Phenylalanine--tRNA ligase alpha subunit">
    <location>
        <begin position="1"/>
        <end position="327"/>
    </location>
</feature>
<feature type="binding site" evidence="1">
    <location>
        <position position="252"/>
    </location>
    <ligand>
        <name>Mg(2+)</name>
        <dbReference type="ChEBI" id="CHEBI:18420"/>
        <note>shared with beta subunit</note>
    </ligand>
</feature>
<comment type="catalytic activity">
    <reaction evidence="1">
        <text>tRNA(Phe) + L-phenylalanine + ATP = L-phenylalanyl-tRNA(Phe) + AMP + diphosphate + H(+)</text>
        <dbReference type="Rhea" id="RHEA:19413"/>
        <dbReference type="Rhea" id="RHEA-COMP:9668"/>
        <dbReference type="Rhea" id="RHEA-COMP:9699"/>
        <dbReference type="ChEBI" id="CHEBI:15378"/>
        <dbReference type="ChEBI" id="CHEBI:30616"/>
        <dbReference type="ChEBI" id="CHEBI:33019"/>
        <dbReference type="ChEBI" id="CHEBI:58095"/>
        <dbReference type="ChEBI" id="CHEBI:78442"/>
        <dbReference type="ChEBI" id="CHEBI:78531"/>
        <dbReference type="ChEBI" id="CHEBI:456215"/>
        <dbReference type="EC" id="6.1.1.20"/>
    </reaction>
</comment>
<comment type="cofactor">
    <cofactor evidence="1">
        <name>Mg(2+)</name>
        <dbReference type="ChEBI" id="CHEBI:18420"/>
    </cofactor>
    <text evidence="1">Binds 2 magnesium ions per tetramer.</text>
</comment>
<comment type="subunit">
    <text evidence="1">Tetramer of two alpha and two beta subunits.</text>
</comment>
<comment type="subcellular location">
    <subcellularLocation>
        <location evidence="1">Cytoplasm</location>
    </subcellularLocation>
</comment>
<comment type="similarity">
    <text evidence="1">Belongs to the class-II aminoacyl-tRNA synthetase family. Phe-tRNA synthetase alpha subunit type 1 subfamily.</text>
</comment>
<keyword id="KW-0030">Aminoacyl-tRNA synthetase</keyword>
<keyword id="KW-0067">ATP-binding</keyword>
<keyword id="KW-0963">Cytoplasm</keyword>
<keyword id="KW-0436">Ligase</keyword>
<keyword id="KW-0460">Magnesium</keyword>
<keyword id="KW-0479">Metal-binding</keyword>
<keyword id="KW-0547">Nucleotide-binding</keyword>
<keyword id="KW-0648">Protein biosynthesis</keyword>
<evidence type="ECO:0000255" key="1">
    <source>
        <dbReference type="HAMAP-Rule" id="MF_00281"/>
    </source>
</evidence>
<accession>B4T4N2</accession>
<name>SYFA_SALNS</name>
<organism>
    <name type="scientific">Salmonella newport (strain SL254)</name>
    <dbReference type="NCBI Taxonomy" id="423368"/>
    <lineage>
        <taxon>Bacteria</taxon>
        <taxon>Pseudomonadati</taxon>
        <taxon>Pseudomonadota</taxon>
        <taxon>Gammaproteobacteria</taxon>
        <taxon>Enterobacterales</taxon>
        <taxon>Enterobacteriaceae</taxon>
        <taxon>Salmonella</taxon>
    </lineage>
</organism>
<protein>
    <recommendedName>
        <fullName evidence="1">Phenylalanine--tRNA ligase alpha subunit</fullName>
        <ecNumber evidence="1">6.1.1.20</ecNumber>
    </recommendedName>
    <alternativeName>
        <fullName evidence="1">Phenylalanyl-tRNA synthetase alpha subunit</fullName>
        <shortName evidence="1">PheRS</shortName>
    </alternativeName>
</protein>
<proteinExistence type="inferred from homology"/>
<dbReference type="EC" id="6.1.1.20" evidence="1"/>
<dbReference type="EMBL" id="CP001113">
    <property type="protein sequence ID" value="ACF64103.1"/>
    <property type="molecule type" value="Genomic_DNA"/>
</dbReference>
<dbReference type="RefSeq" id="WP_000018567.1">
    <property type="nucleotide sequence ID" value="NZ_CCMR01000003.1"/>
</dbReference>
<dbReference type="SMR" id="B4T4N2"/>
<dbReference type="KEGG" id="see:SNSL254_A1448"/>
<dbReference type="HOGENOM" id="CLU_025086_0_1_6"/>
<dbReference type="Proteomes" id="UP000008824">
    <property type="component" value="Chromosome"/>
</dbReference>
<dbReference type="GO" id="GO:0005737">
    <property type="term" value="C:cytoplasm"/>
    <property type="evidence" value="ECO:0007669"/>
    <property type="project" value="UniProtKB-SubCell"/>
</dbReference>
<dbReference type="GO" id="GO:0005524">
    <property type="term" value="F:ATP binding"/>
    <property type="evidence" value="ECO:0007669"/>
    <property type="project" value="UniProtKB-UniRule"/>
</dbReference>
<dbReference type="GO" id="GO:0000287">
    <property type="term" value="F:magnesium ion binding"/>
    <property type="evidence" value="ECO:0007669"/>
    <property type="project" value="UniProtKB-UniRule"/>
</dbReference>
<dbReference type="GO" id="GO:0004826">
    <property type="term" value="F:phenylalanine-tRNA ligase activity"/>
    <property type="evidence" value="ECO:0007669"/>
    <property type="project" value="UniProtKB-UniRule"/>
</dbReference>
<dbReference type="GO" id="GO:0000049">
    <property type="term" value="F:tRNA binding"/>
    <property type="evidence" value="ECO:0007669"/>
    <property type="project" value="InterPro"/>
</dbReference>
<dbReference type="GO" id="GO:0006432">
    <property type="term" value="P:phenylalanyl-tRNA aminoacylation"/>
    <property type="evidence" value="ECO:0007669"/>
    <property type="project" value="UniProtKB-UniRule"/>
</dbReference>
<dbReference type="CDD" id="cd00496">
    <property type="entry name" value="PheRS_alpha_core"/>
    <property type="match status" value="1"/>
</dbReference>
<dbReference type="FunFam" id="3.30.930.10:FF:000003">
    <property type="entry name" value="Phenylalanine--tRNA ligase alpha subunit"/>
    <property type="match status" value="1"/>
</dbReference>
<dbReference type="Gene3D" id="3.30.930.10">
    <property type="entry name" value="Bira Bifunctional Protein, Domain 2"/>
    <property type="match status" value="1"/>
</dbReference>
<dbReference type="HAMAP" id="MF_00281">
    <property type="entry name" value="Phe_tRNA_synth_alpha1"/>
    <property type="match status" value="1"/>
</dbReference>
<dbReference type="InterPro" id="IPR006195">
    <property type="entry name" value="aa-tRNA-synth_II"/>
</dbReference>
<dbReference type="InterPro" id="IPR045864">
    <property type="entry name" value="aa-tRNA-synth_II/BPL/LPL"/>
</dbReference>
<dbReference type="InterPro" id="IPR004529">
    <property type="entry name" value="Phe-tRNA-synth_IIc_asu"/>
</dbReference>
<dbReference type="InterPro" id="IPR004188">
    <property type="entry name" value="Phe-tRNA_ligase_II_N"/>
</dbReference>
<dbReference type="InterPro" id="IPR022911">
    <property type="entry name" value="Phe_tRNA_ligase_alpha1_bac"/>
</dbReference>
<dbReference type="InterPro" id="IPR002319">
    <property type="entry name" value="Phenylalanyl-tRNA_Synthase"/>
</dbReference>
<dbReference type="InterPro" id="IPR010978">
    <property type="entry name" value="tRNA-bd_arm"/>
</dbReference>
<dbReference type="NCBIfam" id="TIGR00468">
    <property type="entry name" value="pheS"/>
    <property type="match status" value="1"/>
</dbReference>
<dbReference type="PANTHER" id="PTHR11538:SF41">
    <property type="entry name" value="PHENYLALANINE--TRNA LIGASE, MITOCHONDRIAL"/>
    <property type="match status" value="1"/>
</dbReference>
<dbReference type="PANTHER" id="PTHR11538">
    <property type="entry name" value="PHENYLALANYL-TRNA SYNTHETASE"/>
    <property type="match status" value="1"/>
</dbReference>
<dbReference type="Pfam" id="PF02912">
    <property type="entry name" value="Phe_tRNA-synt_N"/>
    <property type="match status" value="1"/>
</dbReference>
<dbReference type="Pfam" id="PF01409">
    <property type="entry name" value="tRNA-synt_2d"/>
    <property type="match status" value="1"/>
</dbReference>
<dbReference type="SUPFAM" id="SSF55681">
    <property type="entry name" value="Class II aaRS and biotin synthetases"/>
    <property type="match status" value="1"/>
</dbReference>
<dbReference type="SUPFAM" id="SSF46589">
    <property type="entry name" value="tRNA-binding arm"/>
    <property type="match status" value="1"/>
</dbReference>
<dbReference type="PROSITE" id="PS50862">
    <property type="entry name" value="AA_TRNA_LIGASE_II"/>
    <property type="match status" value="1"/>
</dbReference>
<gene>
    <name evidence="1" type="primary">pheS</name>
    <name type="ordered locus">SNSL254_A1448</name>
</gene>
<sequence length="327" mass="36756">MSHLAELVANAAAAINQASDVAALDNVRVEYLGKKGHLTLQMTTLRDLPPEERPAAGAVINAAKEQVQQALNARKAELESAALDARLAAETIDISLPGRRIENGGLHPVTRTIDRIESFFGELGFTVATGPEIEDDYHNFDALNIPGHHPARADHDTFWFDATRLLRTQTSGVQIRTMKAQQPPIRIIAPGRVYRNDYDQTHTPMFHQMEGLIVDTNISFTNLKGTLHDFLRNFFEEDLQIRFRPSYFPFTEPSAEVDVMGKNGKWLEVLGCGMVHPNVLRNVGIDPEIYSGFAFGMGMERLTMLRYGVTDLRSFFENDLRFLKQFK</sequence>
<reference key="1">
    <citation type="journal article" date="2011" name="J. Bacteriol.">
        <title>Comparative genomics of 28 Salmonella enterica isolates: evidence for CRISPR-mediated adaptive sublineage evolution.</title>
        <authorList>
            <person name="Fricke W.F."/>
            <person name="Mammel M.K."/>
            <person name="McDermott P.F."/>
            <person name="Tartera C."/>
            <person name="White D.G."/>
            <person name="Leclerc J.E."/>
            <person name="Ravel J."/>
            <person name="Cebula T.A."/>
        </authorList>
    </citation>
    <scope>NUCLEOTIDE SEQUENCE [LARGE SCALE GENOMIC DNA]</scope>
    <source>
        <strain>SL254</strain>
    </source>
</reference>